<comment type="function">
    <text evidence="1">Catalyzes the decarboxylation of four acetate groups of uroporphyrinogen-III to yield coproporphyrinogen-III.</text>
</comment>
<comment type="catalytic activity">
    <reaction evidence="1">
        <text>uroporphyrinogen III + 4 H(+) = coproporphyrinogen III + 4 CO2</text>
        <dbReference type="Rhea" id="RHEA:19865"/>
        <dbReference type="ChEBI" id="CHEBI:15378"/>
        <dbReference type="ChEBI" id="CHEBI:16526"/>
        <dbReference type="ChEBI" id="CHEBI:57308"/>
        <dbReference type="ChEBI" id="CHEBI:57309"/>
        <dbReference type="EC" id="4.1.1.37"/>
    </reaction>
</comment>
<comment type="pathway">
    <text evidence="1">Porphyrin-containing compound metabolism; protoporphyrin-IX biosynthesis; coproporphyrinogen-III from 5-aminolevulinate: step 4/4.</text>
</comment>
<comment type="subunit">
    <text evidence="1">Homodimer.</text>
</comment>
<comment type="subcellular location">
    <subcellularLocation>
        <location evidence="1">Cytoplasm</location>
    </subcellularLocation>
</comment>
<comment type="similarity">
    <text evidence="1">Belongs to the uroporphyrinogen decarboxylase family.</text>
</comment>
<keyword id="KW-0963">Cytoplasm</keyword>
<keyword id="KW-0210">Decarboxylase</keyword>
<keyword id="KW-0456">Lyase</keyword>
<keyword id="KW-0627">Porphyrin biosynthesis</keyword>
<dbReference type="EC" id="4.1.1.37" evidence="1"/>
<dbReference type="EMBL" id="CU928158">
    <property type="protein sequence ID" value="CAQ91208.1"/>
    <property type="molecule type" value="Genomic_DNA"/>
</dbReference>
<dbReference type="RefSeq" id="WP_000137668.1">
    <property type="nucleotide sequence ID" value="NC_011740.1"/>
</dbReference>
<dbReference type="SMR" id="B7LUK5"/>
<dbReference type="GeneID" id="75059361"/>
<dbReference type="KEGG" id="efe:EFER_3757"/>
<dbReference type="HOGENOM" id="CLU_040933_0_0_6"/>
<dbReference type="OrthoDB" id="9806656at2"/>
<dbReference type="UniPathway" id="UPA00251">
    <property type="reaction ID" value="UER00321"/>
</dbReference>
<dbReference type="Proteomes" id="UP000000745">
    <property type="component" value="Chromosome"/>
</dbReference>
<dbReference type="GO" id="GO:0005829">
    <property type="term" value="C:cytosol"/>
    <property type="evidence" value="ECO:0007669"/>
    <property type="project" value="TreeGrafter"/>
</dbReference>
<dbReference type="GO" id="GO:0004853">
    <property type="term" value="F:uroporphyrinogen decarboxylase activity"/>
    <property type="evidence" value="ECO:0007669"/>
    <property type="project" value="UniProtKB-UniRule"/>
</dbReference>
<dbReference type="GO" id="GO:0019353">
    <property type="term" value="P:protoporphyrinogen IX biosynthetic process from glutamate"/>
    <property type="evidence" value="ECO:0007669"/>
    <property type="project" value="TreeGrafter"/>
</dbReference>
<dbReference type="CDD" id="cd00717">
    <property type="entry name" value="URO-D"/>
    <property type="match status" value="1"/>
</dbReference>
<dbReference type="FunFam" id="3.20.20.210:FF:000001">
    <property type="entry name" value="Uroporphyrinogen decarboxylase"/>
    <property type="match status" value="1"/>
</dbReference>
<dbReference type="Gene3D" id="3.20.20.210">
    <property type="match status" value="1"/>
</dbReference>
<dbReference type="HAMAP" id="MF_00218">
    <property type="entry name" value="URO_D"/>
    <property type="match status" value="1"/>
</dbReference>
<dbReference type="InterPro" id="IPR038071">
    <property type="entry name" value="UROD/MetE-like_sf"/>
</dbReference>
<dbReference type="InterPro" id="IPR006361">
    <property type="entry name" value="Uroporphyrinogen_deCO2ase_HemE"/>
</dbReference>
<dbReference type="InterPro" id="IPR000257">
    <property type="entry name" value="Uroporphyrinogen_deCOase"/>
</dbReference>
<dbReference type="NCBIfam" id="TIGR01464">
    <property type="entry name" value="hemE"/>
    <property type="match status" value="1"/>
</dbReference>
<dbReference type="PANTHER" id="PTHR21091">
    <property type="entry name" value="METHYLTETRAHYDROFOLATE:HOMOCYSTEINE METHYLTRANSFERASE RELATED"/>
    <property type="match status" value="1"/>
</dbReference>
<dbReference type="PANTHER" id="PTHR21091:SF169">
    <property type="entry name" value="UROPORPHYRINOGEN DECARBOXYLASE"/>
    <property type="match status" value="1"/>
</dbReference>
<dbReference type="Pfam" id="PF01208">
    <property type="entry name" value="URO-D"/>
    <property type="match status" value="1"/>
</dbReference>
<dbReference type="SUPFAM" id="SSF51726">
    <property type="entry name" value="UROD/MetE-like"/>
    <property type="match status" value="1"/>
</dbReference>
<dbReference type="PROSITE" id="PS00906">
    <property type="entry name" value="UROD_1"/>
    <property type="match status" value="1"/>
</dbReference>
<dbReference type="PROSITE" id="PS00907">
    <property type="entry name" value="UROD_2"/>
    <property type="match status" value="1"/>
</dbReference>
<protein>
    <recommendedName>
        <fullName evidence="1">Uroporphyrinogen decarboxylase</fullName>
        <shortName evidence="1">UPD</shortName>
        <shortName evidence="1">URO-D</shortName>
        <ecNumber evidence="1">4.1.1.37</ecNumber>
    </recommendedName>
</protein>
<feature type="chain" id="PRO_1000197525" description="Uroporphyrinogen decarboxylase">
    <location>
        <begin position="1"/>
        <end position="354"/>
    </location>
</feature>
<feature type="binding site" evidence="1">
    <location>
        <begin position="27"/>
        <end position="31"/>
    </location>
    <ligand>
        <name>substrate</name>
    </ligand>
</feature>
<feature type="binding site" evidence="1">
    <location>
        <position position="77"/>
    </location>
    <ligand>
        <name>substrate</name>
    </ligand>
</feature>
<feature type="binding site" evidence="1">
    <location>
        <position position="154"/>
    </location>
    <ligand>
        <name>substrate</name>
    </ligand>
</feature>
<feature type="binding site" evidence="1">
    <location>
        <position position="209"/>
    </location>
    <ligand>
        <name>substrate</name>
    </ligand>
</feature>
<feature type="binding site" evidence="1">
    <location>
        <position position="327"/>
    </location>
    <ligand>
        <name>substrate</name>
    </ligand>
</feature>
<feature type="site" description="Transition state stabilizer" evidence="1">
    <location>
        <position position="77"/>
    </location>
</feature>
<gene>
    <name evidence="1" type="primary">hemE</name>
    <name type="ordered locus">EFER_3757</name>
</gene>
<reference key="1">
    <citation type="journal article" date="2009" name="PLoS Genet.">
        <title>Organised genome dynamics in the Escherichia coli species results in highly diverse adaptive paths.</title>
        <authorList>
            <person name="Touchon M."/>
            <person name="Hoede C."/>
            <person name="Tenaillon O."/>
            <person name="Barbe V."/>
            <person name="Baeriswyl S."/>
            <person name="Bidet P."/>
            <person name="Bingen E."/>
            <person name="Bonacorsi S."/>
            <person name="Bouchier C."/>
            <person name="Bouvet O."/>
            <person name="Calteau A."/>
            <person name="Chiapello H."/>
            <person name="Clermont O."/>
            <person name="Cruveiller S."/>
            <person name="Danchin A."/>
            <person name="Diard M."/>
            <person name="Dossat C."/>
            <person name="Karoui M.E."/>
            <person name="Frapy E."/>
            <person name="Garry L."/>
            <person name="Ghigo J.M."/>
            <person name="Gilles A.M."/>
            <person name="Johnson J."/>
            <person name="Le Bouguenec C."/>
            <person name="Lescat M."/>
            <person name="Mangenot S."/>
            <person name="Martinez-Jehanne V."/>
            <person name="Matic I."/>
            <person name="Nassif X."/>
            <person name="Oztas S."/>
            <person name="Petit M.A."/>
            <person name="Pichon C."/>
            <person name="Rouy Z."/>
            <person name="Ruf C.S."/>
            <person name="Schneider D."/>
            <person name="Tourret J."/>
            <person name="Vacherie B."/>
            <person name="Vallenet D."/>
            <person name="Medigue C."/>
            <person name="Rocha E.P.C."/>
            <person name="Denamur E."/>
        </authorList>
    </citation>
    <scope>NUCLEOTIDE SEQUENCE [LARGE SCALE GENOMIC DNA]</scope>
    <source>
        <strain>ATCC 35469 / DSM 13698 / BCRC 15582 / CCUG 18766 / IAM 14443 / JCM 21226 / LMG 7866 / NBRC 102419 / NCTC 12128 / CDC 0568-73</strain>
    </source>
</reference>
<accession>B7LUK5</accession>
<sequence>MTELKNDRYLRALLRQPVDVTPVWMMRQAGRYLPEYKATRAQAGDFMSLCKNAELACEVTLQPLRRYPLDAAILFSDILTVPDAMGLGLYFEAGEGPRFTSPVTCKADVDKLPIPDPEDELGYVMNAVRTIRRELKGEVPLIGFSGSPWTLATYMVEGSSSKAFTVIKKMMYADPQALHALLDKLAKSVTLYLNAQIKAGAQAVMIFDTWGGVLTGRDYQQFSLYYMHKIVDGLLRENDGRRVPVTLFTKGGGQWLEAMAETGCDALGLDWTTDIADARRRVGNKVALQGNMDPSMLYAPPARIEEEVATILAGFGHGEGHVFNLGHGIHQDVPPEHAGVFVEAVHRLSEQYHR</sequence>
<proteinExistence type="inferred from homology"/>
<organism>
    <name type="scientific">Escherichia fergusonii (strain ATCC 35469 / DSM 13698 / CCUG 18766 / IAM 14443 / JCM 21226 / LMG 7866 / NBRC 102419 / NCTC 12128 / CDC 0568-73)</name>
    <dbReference type="NCBI Taxonomy" id="585054"/>
    <lineage>
        <taxon>Bacteria</taxon>
        <taxon>Pseudomonadati</taxon>
        <taxon>Pseudomonadota</taxon>
        <taxon>Gammaproteobacteria</taxon>
        <taxon>Enterobacterales</taxon>
        <taxon>Enterobacteriaceae</taxon>
        <taxon>Escherichia</taxon>
    </lineage>
</organism>
<evidence type="ECO:0000255" key="1">
    <source>
        <dbReference type="HAMAP-Rule" id="MF_00218"/>
    </source>
</evidence>
<name>DCUP_ESCF3</name>